<accession>A0A0G2K7V7</accession>
<accession>Q60I19</accession>
<sequence>MEASSGTAGPAVLLLILALLLTESQGSRSQGTHTLRYDVTACFLEGSEQTRLLVLIYVDDELFLRYNGDRRSAKPWACWIKGHGGDETCTREAENLPKEEERLREMMADMINQKGHDKGPYTLQATLDCELQRNGSTRGFWHLGYEGRNLLTFDQKTLTWTMDVPFTQQKKTFEPRAPKADLVKTFLDETCPARLQRHLASLSNVLPDTGSPVVIVTCRNYPVGRITLTCRAFNLSSRVATLLWLRDGKPVQQDVFGPGTILPSGDGTYQTWVSIRVLPGQEPQFACNLRHSNRTIMQTAVSGESMGWPSASWATRQEAEGPHRTHNDHVVDGGLVTGNANKDSPDASSCATASAISAFPVVVLSVALPRAN</sequence>
<gene>
    <name evidence="8" type="primary">Mill2</name>
    <name evidence="13" type="synonym">Micb</name>
</gene>
<name>MILL2_RAT</name>
<organism evidence="12">
    <name type="scientific">Rattus norvegicus</name>
    <name type="common">Rat</name>
    <dbReference type="NCBI Taxonomy" id="10116"/>
    <lineage>
        <taxon>Eukaryota</taxon>
        <taxon>Metazoa</taxon>
        <taxon>Chordata</taxon>
        <taxon>Craniata</taxon>
        <taxon>Vertebrata</taxon>
        <taxon>Euteleostomi</taxon>
        <taxon>Mammalia</taxon>
        <taxon>Eutheria</taxon>
        <taxon>Euarchontoglires</taxon>
        <taxon>Glires</taxon>
        <taxon>Rodentia</taxon>
        <taxon>Myomorpha</taxon>
        <taxon>Muroidea</taxon>
        <taxon>Muridae</taxon>
        <taxon>Murinae</taxon>
        <taxon>Rattus</taxon>
    </lineage>
</organism>
<reference evidence="11" key="1">
    <citation type="journal article" date="2004" name="Eur. J. Immunol.">
        <title>Comparative genomics of the Mill family: a rapidly evolving MHC class I gene family.</title>
        <authorList>
            <person name="Watanabe Y."/>
            <person name="Maruoka T."/>
            <person name="Walter L."/>
            <person name="Kasahara M."/>
        </authorList>
    </citation>
    <scope>NUCLEOTIDE SEQUENCE [MRNA]</scope>
    <scope>TISSUE SPECIFICITY</scope>
    <source>
        <strain evidence="11">WkA/Hkm</strain>
        <tissue evidence="11">Heart</tissue>
    </source>
</reference>
<reference evidence="12" key="2">
    <citation type="journal article" date="2004" name="Nature">
        <title>Genome sequence of the Brown Norway rat yields insights into mammalian evolution.</title>
        <authorList>
            <person name="Gibbs R.A."/>
            <person name="Weinstock G.M."/>
            <person name="Metzker M.L."/>
            <person name="Muzny D.M."/>
            <person name="Sodergren E.J."/>
            <person name="Scherer S."/>
            <person name="Scott G."/>
            <person name="Steffen D."/>
            <person name="Worley K.C."/>
            <person name="Burch P.E."/>
            <person name="Okwuonu G."/>
            <person name="Hines S."/>
            <person name="Lewis L."/>
            <person name="Deramo C."/>
            <person name="Delgado O."/>
            <person name="Dugan-Rocha S."/>
            <person name="Miner G."/>
            <person name="Morgan M."/>
            <person name="Hawes A."/>
            <person name="Gill R."/>
            <person name="Holt R.A."/>
            <person name="Adams M.D."/>
            <person name="Amanatides P.G."/>
            <person name="Baden-Tillson H."/>
            <person name="Barnstead M."/>
            <person name="Chin S."/>
            <person name="Evans C.A."/>
            <person name="Ferriera S."/>
            <person name="Fosler C."/>
            <person name="Glodek A."/>
            <person name="Gu Z."/>
            <person name="Jennings D."/>
            <person name="Kraft C.L."/>
            <person name="Nguyen T."/>
            <person name="Pfannkoch C.M."/>
            <person name="Sitter C."/>
            <person name="Sutton G.G."/>
            <person name="Venter J.C."/>
            <person name="Woodage T."/>
            <person name="Smith D."/>
            <person name="Lee H.-M."/>
            <person name="Gustafson E."/>
            <person name="Cahill P."/>
            <person name="Kana A."/>
            <person name="Doucette-Stamm L."/>
            <person name="Weinstock K."/>
            <person name="Fechtel K."/>
            <person name="Weiss R.B."/>
            <person name="Dunn D.M."/>
            <person name="Green E.D."/>
            <person name="Blakesley R.W."/>
            <person name="Bouffard G.G."/>
            <person name="De Jong P.J."/>
            <person name="Osoegawa K."/>
            <person name="Zhu B."/>
            <person name="Marra M."/>
            <person name="Schein J."/>
            <person name="Bosdet I."/>
            <person name="Fjell C."/>
            <person name="Jones S."/>
            <person name="Krzywinski M."/>
            <person name="Mathewson C."/>
            <person name="Siddiqui A."/>
            <person name="Wye N."/>
            <person name="McPherson J."/>
            <person name="Zhao S."/>
            <person name="Fraser C.M."/>
            <person name="Shetty J."/>
            <person name="Shatsman S."/>
            <person name="Geer K."/>
            <person name="Chen Y."/>
            <person name="Abramzon S."/>
            <person name="Nierman W.C."/>
            <person name="Havlak P.H."/>
            <person name="Chen R."/>
            <person name="Durbin K.J."/>
            <person name="Egan A."/>
            <person name="Ren Y."/>
            <person name="Song X.-Z."/>
            <person name="Li B."/>
            <person name="Liu Y."/>
            <person name="Qin X."/>
            <person name="Cawley S."/>
            <person name="Cooney A.J."/>
            <person name="D'Souza L.M."/>
            <person name="Martin K."/>
            <person name="Wu J.Q."/>
            <person name="Gonzalez-Garay M.L."/>
            <person name="Jackson A.R."/>
            <person name="Kalafus K.J."/>
            <person name="McLeod M.P."/>
            <person name="Milosavljevic A."/>
            <person name="Virk D."/>
            <person name="Volkov A."/>
            <person name="Wheeler D.A."/>
            <person name="Zhang Z."/>
            <person name="Bailey J.A."/>
            <person name="Eichler E.E."/>
            <person name="Tuzun E."/>
            <person name="Birney E."/>
            <person name="Mongin E."/>
            <person name="Ureta-Vidal A."/>
            <person name="Woodwark C."/>
            <person name="Zdobnov E."/>
            <person name="Bork P."/>
            <person name="Suyama M."/>
            <person name="Torrents D."/>
            <person name="Alexandersson M."/>
            <person name="Trask B.J."/>
            <person name="Young J.M."/>
            <person name="Huang H."/>
            <person name="Wang H."/>
            <person name="Xing H."/>
            <person name="Daniels S."/>
            <person name="Gietzen D."/>
            <person name="Schmidt J."/>
            <person name="Stevens K."/>
            <person name="Vitt U."/>
            <person name="Wingrove J."/>
            <person name="Camara F."/>
            <person name="Mar Alba M."/>
            <person name="Abril J.F."/>
            <person name="Guigo R."/>
            <person name="Smit A."/>
            <person name="Dubchak I."/>
            <person name="Rubin E.M."/>
            <person name="Couronne O."/>
            <person name="Poliakov A."/>
            <person name="Huebner N."/>
            <person name="Ganten D."/>
            <person name="Goesele C."/>
            <person name="Hummel O."/>
            <person name="Kreitler T."/>
            <person name="Lee Y.-A."/>
            <person name="Monti J."/>
            <person name="Schulz H."/>
            <person name="Zimdahl H."/>
            <person name="Himmelbauer H."/>
            <person name="Lehrach H."/>
            <person name="Jacob H.J."/>
            <person name="Bromberg S."/>
            <person name="Gullings-Handley J."/>
            <person name="Jensen-Seaman M.I."/>
            <person name="Kwitek A.E."/>
            <person name="Lazar J."/>
            <person name="Pasko D."/>
            <person name="Tonellato P.J."/>
            <person name="Twigger S."/>
            <person name="Ponting C.P."/>
            <person name="Duarte J.M."/>
            <person name="Rice S."/>
            <person name="Goodstadt L."/>
            <person name="Beatson S.A."/>
            <person name="Emes R.D."/>
            <person name="Winter E.E."/>
            <person name="Webber C."/>
            <person name="Brandt P."/>
            <person name="Nyakatura G."/>
            <person name="Adetobi M."/>
            <person name="Chiaromonte F."/>
            <person name="Elnitski L."/>
            <person name="Eswara P."/>
            <person name="Hardison R.C."/>
            <person name="Hou M."/>
            <person name="Kolbe D."/>
            <person name="Makova K."/>
            <person name="Miller W."/>
            <person name="Nekrutenko A."/>
            <person name="Riemer C."/>
            <person name="Schwartz S."/>
            <person name="Taylor J."/>
            <person name="Yang S."/>
            <person name="Zhang Y."/>
            <person name="Lindpaintner K."/>
            <person name="Andrews T.D."/>
            <person name="Caccamo M."/>
            <person name="Clamp M."/>
            <person name="Clarke L."/>
            <person name="Curwen V."/>
            <person name="Durbin R.M."/>
            <person name="Eyras E."/>
            <person name="Searle S.M."/>
            <person name="Cooper G.M."/>
            <person name="Batzoglou S."/>
            <person name="Brudno M."/>
            <person name="Sidow A."/>
            <person name="Stone E.A."/>
            <person name="Payseur B.A."/>
            <person name="Bourque G."/>
            <person name="Lopez-Otin C."/>
            <person name="Puente X.S."/>
            <person name="Chakrabarti K."/>
            <person name="Chatterji S."/>
            <person name="Dewey C."/>
            <person name="Pachter L."/>
            <person name="Bray N."/>
            <person name="Yap V.B."/>
            <person name="Caspi A."/>
            <person name="Tesler G."/>
            <person name="Pevzner P.A."/>
            <person name="Haussler D."/>
            <person name="Roskin K.M."/>
            <person name="Baertsch R."/>
            <person name="Clawson H."/>
            <person name="Furey T.S."/>
            <person name="Hinrichs A.S."/>
            <person name="Karolchik D."/>
            <person name="Kent W.J."/>
            <person name="Rosenbloom K.R."/>
            <person name="Trumbower H."/>
            <person name="Weirauch M."/>
            <person name="Cooper D.N."/>
            <person name="Stenson P.D."/>
            <person name="Ma B."/>
            <person name="Brent M."/>
            <person name="Arumugam M."/>
            <person name="Shteynberg D."/>
            <person name="Copley R.R."/>
            <person name="Taylor M.S."/>
            <person name="Riethman H."/>
            <person name="Mudunuri U."/>
            <person name="Peterson J."/>
            <person name="Guyer M."/>
            <person name="Felsenfeld A."/>
            <person name="Old S."/>
            <person name="Mockrin S."/>
            <person name="Collins F.S."/>
        </authorList>
    </citation>
    <scope>NUCLEOTIDE SEQUENCE [LARGE SCALE GENOMIC DNA]</scope>
    <source>
        <strain evidence="12">Brown Norway</strain>
    </source>
</reference>
<proteinExistence type="evidence at transcript level"/>
<dbReference type="EMBL" id="AB113961">
    <property type="protein sequence ID" value="BAD54761.1"/>
    <property type="molecule type" value="mRNA"/>
</dbReference>
<dbReference type="EMBL" id="AC093995">
    <property type="status" value="NOT_ANNOTATED_CDS"/>
    <property type="molecule type" value="Genomic_DNA"/>
</dbReference>
<dbReference type="EMBL" id="AC110846">
    <property type="status" value="NOT_ANNOTATED_CDS"/>
    <property type="molecule type" value="Genomic_DNA"/>
</dbReference>
<dbReference type="RefSeq" id="NP_001017468.1">
    <property type="nucleotide sequence ID" value="NM_001017468.2"/>
</dbReference>
<dbReference type="SMR" id="A0A0G2K7V7"/>
<dbReference type="FunCoup" id="A0A0G2K7V7">
    <property type="interactions" value="35"/>
</dbReference>
<dbReference type="STRING" id="10116.ENSRNOP00000074366"/>
<dbReference type="GlyCosmos" id="A0A0G2K7V7">
    <property type="glycosylation" value="3 sites, No reported glycans"/>
</dbReference>
<dbReference type="GlyGen" id="A0A0G2K7V7">
    <property type="glycosylation" value="3 sites"/>
</dbReference>
<dbReference type="PhosphoSitePlus" id="A0A0G2K7V7"/>
<dbReference type="GeneID" id="365212"/>
<dbReference type="KEGG" id="rno:365212"/>
<dbReference type="AGR" id="RGD:1564508"/>
<dbReference type="CTD" id="4277"/>
<dbReference type="RGD" id="1564508">
    <property type="gene designation" value="Micb"/>
</dbReference>
<dbReference type="VEuPathDB" id="HostDB:ENSRNOG00000057645"/>
<dbReference type="InParanoid" id="A0A0G2K7V7"/>
<dbReference type="OrthoDB" id="75610at9989"/>
<dbReference type="PRO" id="PR:A0A0G2K7V7"/>
<dbReference type="Proteomes" id="UP000002494">
    <property type="component" value="Chromosome 1"/>
</dbReference>
<dbReference type="Bgee" id="ENSRNOG00000057645">
    <property type="expression patterns" value="Expressed in lung and 17 other cell types or tissues"/>
</dbReference>
<dbReference type="GO" id="GO:0009897">
    <property type="term" value="C:external side of plasma membrane"/>
    <property type="evidence" value="ECO:0000266"/>
    <property type="project" value="RGD"/>
</dbReference>
<dbReference type="GO" id="GO:0005615">
    <property type="term" value="C:extracellular space"/>
    <property type="evidence" value="ECO:0000318"/>
    <property type="project" value="GO_Central"/>
</dbReference>
<dbReference type="GO" id="GO:0046703">
    <property type="term" value="F:natural killer cell lectin-like receptor binding"/>
    <property type="evidence" value="ECO:0000266"/>
    <property type="project" value="RGD"/>
</dbReference>
<dbReference type="GO" id="GO:0046629">
    <property type="term" value="P:gamma-delta T cell activation"/>
    <property type="evidence" value="ECO:0000266"/>
    <property type="project" value="RGD"/>
</dbReference>
<dbReference type="GO" id="GO:0006955">
    <property type="term" value="P:immune response"/>
    <property type="evidence" value="ECO:0000318"/>
    <property type="project" value="GO_Central"/>
</dbReference>
<dbReference type="GO" id="GO:0002429">
    <property type="term" value="P:immune response-activating cell surface receptor signaling pathway"/>
    <property type="evidence" value="ECO:0000266"/>
    <property type="project" value="RGD"/>
</dbReference>
<dbReference type="GO" id="GO:0009408">
    <property type="term" value="P:response to heat"/>
    <property type="evidence" value="ECO:0000266"/>
    <property type="project" value="RGD"/>
</dbReference>
<dbReference type="GO" id="GO:0006979">
    <property type="term" value="P:response to oxidative stress"/>
    <property type="evidence" value="ECO:0000266"/>
    <property type="project" value="RGD"/>
</dbReference>
<dbReference type="GO" id="GO:0032526">
    <property type="term" value="P:response to retinoic acid"/>
    <property type="evidence" value="ECO:0000266"/>
    <property type="project" value="RGD"/>
</dbReference>
<dbReference type="FunFam" id="3.30.500.10:FF:000003">
    <property type="entry name" value="IgG receptor FcRn large subunit p51"/>
    <property type="match status" value="1"/>
</dbReference>
<dbReference type="FunFam" id="2.60.40.10:FF:000204">
    <property type="entry name" value="Major histocompatibility complex, class I-related protein"/>
    <property type="match status" value="1"/>
</dbReference>
<dbReference type="Gene3D" id="2.60.40.10">
    <property type="entry name" value="Immunoglobulins"/>
    <property type="match status" value="1"/>
</dbReference>
<dbReference type="Gene3D" id="3.30.500.10">
    <property type="entry name" value="MHC class I-like antigen recognition-like"/>
    <property type="match status" value="1"/>
</dbReference>
<dbReference type="InterPro" id="IPR007110">
    <property type="entry name" value="Ig-like_dom"/>
</dbReference>
<dbReference type="InterPro" id="IPR036179">
    <property type="entry name" value="Ig-like_dom_sf"/>
</dbReference>
<dbReference type="InterPro" id="IPR013783">
    <property type="entry name" value="Ig-like_fold"/>
</dbReference>
<dbReference type="InterPro" id="IPR003597">
    <property type="entry name" value="Ig_C1-set"/>
</dbReference>
<dbReference type="InterPro" id="IPR050208">
    <property type="entry name" value="MHC_class-I_related"/>
</dbReference>
<dbReference type="InterPro" id="IPR011161">
    <property type="entry name" value="MHC_I-like_Ag-recog"/>
</dbReference>
<dbReference type="InterPro" id="IPR037055">
    <property type="entry name" value="MHC_I-like_Ag-recog_sf"/>
</dbReference>
<dbReference type="InterPro" id="IPR011162">
    <property type="entry name" value="MHC_I/II-like_Ag-recog"/>
</dbReference>
<dbReference type="PANTHER" id="PTHR16675:SF190">
    <property type="entry name" value="MHC CLASS I-LIKE PROTEIN MILL2"/>
    <property type="match status" value="1"/>
</dbReference>
<dbReference type="PANTHER" id="PTHR16675">
    <property type="entry name" value="MHC CLASS I-RELATED"/>
    <property type="match status" value="1"/>
</dbReference>
<dbReference type="Pfam" id="PF07654">
    <property type="entry name" value="C1-set"/>
    <property type="match status" value="1"/>
</dbReference>
<dbReference type="Pfam" id="PF00129">
    <property type="entry name" value="MHC_I"/>
    <property type="match status" value="1"/>
</dbReference>
<dbReference type="SMART" id="SM00407">
    <property type="entry name" value="IGc1"/>
    <property type="match status" value="1"/>
</dbReference>
<dbReference type="SUPFAM" id="SSF48726">
    <property type="entry name" value="Immunoglobulin"/>
    <property type="match status" value="1"/>
</dbReference>
<dbReference type="SUPFAM" id="SSF54452">
    <property type="entry name" value="MHC antigen-recognition domain"/>
    <property type="match status" value="1"/>
</dbReference>
<dbReference type="PROSITE" id="PS50835">
    <property type="entry name" value="IG_LIKE"/>
    <property type="match status" value="1"/>
</dbReference>
<evidence type="ECO:0000250" key="1">
    <source>
        <dbReference type="UniProtKB" id="Q8HWE5"/>
    </source>
</evidence>
<evidence type="ECO:0000250" key="2">
    <source>
        <dbReference type="UniProtKB" id="Q8HWE7"/>
    </source>
</evidence>
<evidence type="ECO:0000255" key="3"/>
<evidence type="ECO:0000255" key="4">
    <source>
        <dbReference type="PROSITE-ProRule" id="PRU00114"/>
    </source>
</evidence>
<evidence type="ECO:0000255" key="5">
    <source>
        <dbReference type="RuleBase" id="RU004439"/>
    </source>
</evidence>
<evidence type="ECO:0000256" key="6">
    <source>
        <dbReference type="SAM" id="MobiDB-lite"/>
    </source>
</evidence>
<evidence type="ECO:0000269" key="7">
    <source>
    </source>
</evidence>
<evidence type="ECO:0000303" key="8">
    <source>
    </source>
</evidence>
<evidence type="ECO:0000305" key="9"/>
<evidence type="ECO:0000305" key="10">
    <source>
    </source>
</evidence>
<evidence type="ECO:0000312" key="11">
    <source>
        <dbReference type="EMBL" id="BAD54761.1"/>
    </source>
</evidence>
<evidence type="ECO:0000312" key="12">
    <source>
        <dbReference type="Proteomes" id="UP000002494"/>
    </source>
</evidence>
<evidence type="ECO:0000312" key="13">
    <source>
        <dbReference type="RGD" id="1564508"/>
    </source>
</evidence>
<comment type="function">
    <text evidence="2">Binds to heparan sulfate proteoglycans on the surface of fibroblast cells.</text>
</comment>
<comment type="subunit">
    <text evidence="2">Heterodimer with B2M.</text>
</comment>
<comment type="subcellular location">
    <subcellularLocation>
        <location evidence="2">Cell membrane</location>
        <topology evidence="2">Lipid-anchor</topology>
        <topology evidence="2">GPI-anchor</topology>
    </subcellularLocation>
</comment>
<comment type="tissue specificity">
    <text evidence="7">Ubiquitously expressed in neonatal and adult tissues.</text>
</comment>
<comment type="similarity">
    <text evidence="5">Belongs to the MHC class I family.</text>
</comment>
<comment type="caution">
    <text evidence="10">Lacks key residues involved in peptide docking, suggesting that this is a non-classical MHC class I protein which does not play a role in antigen presentation.</text>
</comment>
<keyword id="KW-1003">Cell membrane</keyword>
<keyword id="KW-1015">Disulfide bond</keyword>
<keyword id="KW-0325">Glycoprotein</keyword>
<keyword id="KW-0336">GPI-anchor</keyword>
<keyword id="KW-0449">Lipoprotein</keyword>
<keyword id="KW-0472">Membrane</keyword>
<keyword id="KW-1185">Reference proteome</keyword>
<keyword id="KW-0732">Signal</keyword>
<feature type="signal peptide" evidence="3">
    <location>
        <begin position="1"/>
        <end position="26"/>
    </location>
</feature>
<feature type="chain" id="PRO_5002547003" description="MHC class I-like protein MILL2" evidence="9">
    <location>
        <begin position="27"/>
        <end position="350"/>
    </location>
</feature>
<feature type="propeptide" id="PRO_0000452208" description="Removed in mature form" evidence="9">
    <location>
        <begin position="350"/>
        <end position="372"/>
    </location>
</feature>
<feature type="domain" description="Ig-like C1-type" evidence="4">
    <location>
        <begin position="192"/>
        <end position="302"/>
    </location>
</feature>
<feature type="region of interest" description="Alpha-1" evidence="3">
    <location>
        <begin position="28"/>
        <end position="119"/>
    </location>
</feature>
<feature type="region of interest" description="Alpha-2" evidence="3">
    <location>
        <begin position="120"/>
        <end position="210"/>
    </location>
</feature>
<feature type="region of interest" description="Alpha-3" evidence="3">
    <location>
        <begin position="211"/>
        <end position="339"/>
    </location>
</feature>
<feature type="region of interest" description="Disordered" evidence="6">
    <location>
        <begin position="308"/>
        <end position="349"/>
    </location>
</feature>
<feature type="region of interest" description="Connecting peptide" evidence="3">
    <location>
        <begin position="340"/>
        <end position="348"/>
    </location>
</feature>
<feature type="compositionally biased region" description="Basic and acidic residues" evidence="6">
    <location>
        <begin position="317"/>
        <end position="331"/>
    </location>
</feature>
<feature type="lipid moiety-binding region" description="GPI-anchor amidated serine" evidence="1">
    <location>
        <position position="349"/>
    </location>
</feature>
<feature type="glycosylation site" description="N-linked (GlcNAc...) asparagine" evidence="3">
    <location>
        <position position="134"/>
    </location>
</feature>
<feature type="glycosylation site" description="N-linked (GlcNAc...) asparagine" evidence="3">
    <location>
        <position position="234"/>
    </location>
</feature>
<feature type="glycosylation site" description="N-linked (GlcNAc...) asparagine" evidence="3">
    <location>
        <position position="293"/>
    </location>
</feature>
<feature type="disulfide bond" evidence="1">
    <location>
        <begin position="78"/>
        <end position="89"/>
    </location>
</feature>
<feature type="disulfide bond" evidence="1">
    <location>
        <begin position="129"/>
        <end position="191"/>
    </location>
</feature>
<feature type="disulfide bond" evidence="4">
    <location>
        <begin position="230"/>
        <end position="287"/>
    </location>
</feature>
<feature type="sequence conflict" description="In Ref. 1; BAD54761." evidence="9" ref="1">
    <original>TREA</original>
    <variation>AREV</variation>
    <location>
        <begin position="90"/>
        <end position="93"/>
    </location>
</feature>
<feature type="sequence conflict" description="In Ref. 1; BAD54761." evidence="9" ref="1">
    <original>D</original>
    <variation>E</variation>
    <location>
        <position position="109"/>
    </location>
</feature>
<feature type="sequence conflict" description="In Ref. 1; BAD54761." evidence="9" ref="1">
    <original>D</original>
    <variation>G</variation>
    <location>
        <position position="128"/>
    </location>
</feature>
<feature type="sequence conflict" description="In Ref. 1; BAD54761." evidence="9" ref="1">
    <original>F</original>
    <variation>FW</variation>
    <location>
        <position position="173"/>
    </location>
</feature>
<feature type="sequence conflict" description="In Ref. 1; BAD54761." evidence="9" ref="1">
    <original>R</original>
    <variation>H</variation>
    <location>
        <position position="238"/>
    </location>
</feature>
<protein>
    <recommendedName>
        <fullName evidence="9">MHC class I-like protein MILL2</fullName>
    </recommendedName>
    <alternativeName>
        <fullName evidence="13">MHC class I polypeptide-related sequence B</fullName>
    </alternativeName>
    <alternativeName>
        <fullName evidence="8">MHC class I-like located near the leukocyte receptor complex 2</fullName>
    </alternativeName>
</protein>